<keyword id="KW-0131">Cell cycle</keyword>
<keyword id="KW-0132">Cell division</keyword>
<keyword id="KW-0966">Cell projection</keyword>
<keyword id="KW-0969">Cilium</keyword>
<keyword id="KW-0963">Cytoplasm</keyword>
<keyword id="KW-0206">Cytoskeleton</keyword>
<keyword id="KW-0282">Flagellum</keyword>
<keyword id="KW-0342">GTP-binding</keyword>
<keyword id="KW-0547">Nucleotide-binding</keyword>
<keyword id="KW-1185">Reference proteome</keyword>
<gene>
    <name evidence="3" type="primary">SEPTIN10</name>
    <name type="synonym">SEPT10</name>
</gene>
<name>SEP10_BOVIN</name>
<feature type="chain" id="PRO_0000270224" description="Septin-10">
    <location>
        <begin position="1"/>
        <end position="453"/>
    </location>
</feature>
<feature type="domain" description="Septin-type G" evidence="4">
    <location>
        <begin position="62"/>
        <end position="328"/>
    </location>
</feature>
<feature type="region of interest" description="Disordered" evidence="5">
    <location>
        <begin position="18"/>
        <end position="43"/>
    </location>
</feature>
<feature type="region of interest" description="G1 motif" evidence="4">
    <location>
        <begin position="72"/>
        <end position="79"/>
    </location>
</feature>
<feature type="region of interest" description="G3 motif" evidence="4">
    <location>
        <begin position="124"/>
        <end position="127"/>
    </location>
</feature>
<feature type="region of interest" description="G4 motif" evidence="4">
    <location>
        <begin position="207"/>
        <end position="210"/>
    </location>
</feature>
<feature type="region of interest" description="Disordered" evidence="5">
    <location>
        <begin position="433"/>
        <end position="453"/>
    </location>
</feature>
<feature type="compositionally biased region" description="Basic and acidic residues" evidence="5">
    <location>
        <begin position="27"/>
        <end position="37"/>
    </location>
</feature>
<feature type="compositionally biased region" description="Basic and acidic residues" evidence="5">
    <location>
        <begin position="441"/>
        <end position="453"/>
    </location>
</feature>
<feature type="binding site" evidence="1">
    <location>
        <begin position="72"/>
        <end position="79"/>
    </location>
    <ligand>
        <name>GTP</name>
        <dbReference type="ChEBI" id="CHEBI:37565"/>
    </ligand>
</feature>
<feature type="binding site" evidence="1">
    <location>
        <position position="127"/>
    </location>
    <ligand>
        <name>GTP</name>
        <dbReference type="ChEBI" id="CHEBI:37565"/>
    </ligand>
</feature>
<feature type="binding site" evidence="1">
    <location>
        <begin position="208"/>
        <end position="216"/>
    </location>
    <ligand>
        <name>GTP</name>
        <dbReference type="ChEBI" id="CHEBI:37565"/>
    </ligand>
</feature>
<feature type="binding site" evidence="1">
    <location>
        <position position="262"/>
    </location>
    <ligand>
        <name>GTP</name>
        <dbReference type="ChEBI" id="CHEBI:37565"/>
    </ligand>
</feature>
<feature type="binding site" evidence="1">
    <location>
        <position position="277"/>
    </location>
    <ligand>
        <name>GTP</name>
        <dbReference type="ChEBI" id="CHEBI:37565"/>
    </ligand>
</feature>
<sequence length="453" mass="52809">MASEVARHLLFQSHITTKTAHTSSQVSDHEQKQKDSPRSLTMSGHVGFESLPDQLVNRSIQQGFCFNILCVGETGIGKSTLIDTLFNTNFEDHESSHFYPHVRLKAQTYELQESNVRLKLTIVNTVGFGDQINKEESYQPIVDYIDAQFEAYLQEELKIKRSLFNYHDSRVHVCLYFISPTGHSLKTLDLLTMKSLDSKVNIIPVIAKADAISKTELQKFKIKLMSELVSNGVQIYQFPTDDETIAKINASMNGHLPFAVVGSMDEVKVGNKMVKARQYPWGVVQVENENHCDFVKLREMLICTNMEDLRDQTHTRHYELYRRRKLEEMGFMDVGPENQPLSLQETYEAKRHEFYGERQRKEEEMKQLFVQRVKEKEAILKEAERELQAKFEHLKRVHQEEKLRLEEKRRLLEEEIMAFSKKKATSEIYQNQTFMTPGSNLRKDKDRKNSNFM</sequence>
<reference key="1">
    <citation type="submission" date="2005-09" db="EMBL/GenBank/DDBJ databases">
        <authorList>
            <consortium name="NIH - Mammalian Gene Collection (MGC) project"/>
        </authorList>
    </citation>
    <scope>NUCLEOTIDE SEQUENCE [LARGE SCALE MRNA]</scope>
    <source>
        <strain>Hereford</strain>
        <tissue>Hypothalamus</tissue>
    </source>
</reference>
<accession>Q2KJB1</accession>
<organism>
    <name type="scientific">Bos taurus</name>
    <name type="common">Bovine</name>
    <dbReference type="NCBI Taxonomy" id="9913"/>
    <lineage>
        <taxon>Eukaryota</taxon>
        <taxon>Metazoa</taxon>
        <taxon>Chordata</taxon>
        <taxon>Craniata</taxon>
        <taxon>Vertebrata</taxon>
        <taxon>Euteleostomi</taxon>
        <taxon>Mammalia</taxon>
        <taxon>Eutheria</taxon>
        <taxon>Laurasiatheria</taxon>
        <taxon>Artiodactyla</taxon>
        <taxon>Ruminantia</taxon>
        <taxon>Pecora</taxon>
        <taxon>Bovidae</taxon>
        <taxon>Bovinae</taxon>
        <taxon>Bos</taxon>
    </lineage>
</organism>
<protein>
    <recommendedName>
        <fullName>Septin-10</fullName>
    </recommendedName>
</protein>
<evidence type="ECO:0000250" key="1"/>
<evidence type="ECO:0000250" key="2">
    <source>
        <dbReference type="UniProtKB" id="Q8C650"/>
    </source>
</evidence>
<evidence type="ECO:0000250" key="3">
    <source>
        <dbReference type="UniProtKB" id="Q9P0V9"/>
    </source>
</evidence>
<evidence type="ECO:0000255" key="4">
    <source>
        <dbReference type="PROSITE-ProRule" id="PRU01056"/>
    </source>
</evidence>
<evidence type="ECO:0000256" key="5">
    <source>
        <dbReference type="SAM" id="MobiDB-lite"/>
    </source>
</evidence>
<evidence type="ECO:0000305" key="6"/>
<proteinExistence type="evidence at transcript level"/>
<dbReference type="EMBL" id="BC105431">
    <property type="protein sequence ID" value="AAI05432.1"/>
    <property type="molecule type" value="mRNA"/>
</dbReference>
<dbReference type="RefSeq" id="NP_001039641.1">
    <property type="nucleotide sequence ID" value="NM_001046176.2"/>
</dbReference>
<dbReference type="SMR" id="Q2KJB1"/>
<dbReference type="FunCoup" id="Q2KJB1">
    <property type="interactions" value="1159"/>
</dbReference>
<dbReference type="STRING" id="9913.ENSBTAP00000048430"/>
<dbReference type="PaxDb" id="9913-ENSBTAP00000048430"/>
<dbReference type="Ensembl" id="ENSBTAT00000081710.1">
    <property type="protein sequence ID" value="ENSBTAP00000074087.1"/>
    <property type="gene ID" value="ENSBTAG00000022461.6"/>
</dbReference>
<dbReference type="GeneID" id="514603"/>
<dbReference type="KEGG" id="bta:514603"/>
<dbReference type="CTD" id="151011"/>
<dbReference type="VEuPathDB" id="HostDB:ENSBTAG00000022461"/>
<dbReference type="VGNC" id="VGNC:34450">
    <property type="gene designation" value="SEPTIN10"/>
</dbReference>
<dbReference type="eggNOG" id="KOG3859">
    <property type="taxonomic scope" value="Eukaryota"/>
</dbReference>
<dbReference type="GeneTree" id="ENSGT00940000155238"/>
<dbReference type="InParanoid" id="Q2KJB1"/>
<dbReference type="OrthoDB" id="416553at2759"/>
<dbReference type="Proteomes" id="UP000009136">
    <property type="component" value="Chromosome 11"/>
</dbReference>
<dbReference type="Bgee" id="ENSBTAG00000022461">
    <property type="expression patterns" value="Expressed in spermatid and 105 other cell types or tissues"/>
</dbReference>
<dbReference type="GO" id="GO:0032153">
    <property type="term" value="C:cell division site"/>
    <property type="evidence" value="ECO:0000318"/>
    <property type="project" value="GO_Central"/>
</dbReference>
<dbReference type="GO" id="GO:0015630">
    <property type="term" value="C:microtubule cytoskeleton"/>
    <property type="evidence" value="ECO:0000318"/>
    <property type="project" value="GO_Central"/>
</dbReference>
<dbReference type="GO" id="GO:0031514">
    <property type="term" value="C:motile cilium"/>
    <property type="evidence" value="ECO:0007669"/>
    <property type="project" value="UniProtKB-SubCell"/>
</dbReference>
<dbReference type="GO" id="GO:0031105">
    <property type="term" value="C:septin complex"/>
    <property type="evidence" value="ECO:0000318"/>
    <property type="project" value="GO_Central"/>
</dbReference>
<dbReference type="GO" id="GO:0005940">
    <property type="term" value="C:septin ring"/>
    <property type="evidence" value="ECO:0000318"/>
    <property type="project" value="GO_Central"/>
</dbReference>
<dbReference type="GO" id="GO:0005525">
    <property type="term" value="F:GTP binding"/>
    <property type="evidence" value="ECO:0007669"/>
    <property type="project" value="UniProtKB-KW"/>
</dbReference>
<dbReference type="GO" id="GO:0003924">
    <property type="term" value="F:GTPase activity"/>
    <property type="evidence" value="ECO:0000318"/>
    <property type="project" value="GO_Central"/>
</dbReference>
<dbReference type="GO" id="GO:0060090">
    <property type="term" value="F:molecular adaptor activity"/>
    <property type="evidence" value="ECO:0000318"/>
    <property type="project" value="GO_Central"/>
</dbReference>
<dbReference type="GO" id="GO:0061640">
    <property type="term" value="P:cytoskeleton-dependent cytokinesis"/>
    <property type="evidence" value="ECO:0000318"/>
    <property type="project" value="GO_Central"/>
</dbReference>
<dbReference type="GO" id="GO:0008104">
    <property type="term" value="P:protein localization"/>
    <property type="evidence" value="ECO:0000318"/>
    <property type="project" value="GO_Central"/>
</dbReference>
<dbReference type="CDD" id="cd01850">
    <property type="entry name" value="CDC_Septin"/>
    <property type="match status" value="1"/>
</dbReference>
<dbReference type="FunFam" id="3.40.50.300:FF:000036">
    <property type="entry name" value="septin-6 isoform X2"/>
    <property type="match status" value="1"/>
</dbReference>
<dbReference type="Gene3D" id="3.40.50.300">
    <property type="entry name" value="P-loop containing nucleotide triphosphate hydrolases"/>
    <property type="match status" value="1"/>
</dbReference>
<dbReference type="InterPro" id="IPR030379">
    <property type="entry name" value="G_SEPTIN_dom"/>
</dbReference>
<dbReference type="InterPro" id="IPR027417">
    <property type="entry name" value="P-loop_NTPase"/>
</dbReference>
<dbReference type="InterPro" id="IPR016491">
    <property type="entry name" value="Septin"/>
</dbReference>
<dbReference type="PANTHER" id="PTHR18884">
    <property type="entry name" value="SEPTIN"/>
    <property type="match status" value="1"/>
</dbReference>
<dbReference type="Pfam" id="PF00735">
    <property type="entry name" value="Septin"/>
    <property type="match status" value="1"/>
</dbReference>
<dbReference type="PIRSF" id="PIRSF006698">
    <property type="entry name" value="Septin"/>
    <property type="match status" value="1"/>
</dbReference>
<dbReference type="SUPFAM" id="SSF52540">
    <property type="entry name" value="P-loop containing nucleoside triphosphate hydrolases"/>
    <property type="match status" value="1"/>
</dbReference>
<dbReference type="PROSITE" id="PS51719">
    <property type="entry name" value="G_SEPTIN"/>
    <property type="match status" value="1"/>
</dbReference>
<comment type="function">
    <text evidence="1 6">Filament-forming cytoskeletal GTPase (By similarity). May play a role in cytokinesis (Potential).</text>
</comment>
<comment type="subunit">
    <text evidence="2">Septins polymerize into heterooligomeric protein complexes that form filaments, and can associate with cellular membranes, actin filaments and microtubules. GTPase activity is required for filament formation (By similarity). Interacts with ADGB (By similarity).</text>
</comment>
<comment type="subcellular location">
    <subcellularLocation>
        <location evidence="3">Cytoplasm</location>
    </subcellularLocation>
    <subcellularLocation>
        <location evidence="1">Cytoplasm</location>
        <location evidence="1">Cytoskeleton</location>
    </subcellularLocation>
    <subcellularLocation>
        <location evidence="2">Cell projection</location>
        <location evidence="2">Cilium</location>
        <location evidence="2">Flagellum</location>
    </subcellularLocation>
    <text evidence="2">Detected in the annulus of the sperm flagellum and in the neck region in spermatids and mature sperm.</text>
</comment>
<comment type="PTM">
    <text evidence="2">Proteolytically cleaved in vitro in a calmodulin-dependent manner.</text>
</comment>
<comment type="similarity">
    <text evidence="4">Belongs to the TRAFAC class TrmE-Era-EngA-EngB-Septin-like GTPase superfamily. Septin GTPase family.</text>
</comment>